<organism>
    <name type="scientific">Oryzias latipes</name>
    <name type="common">Japanese rice fish</name>
    <name type="synonym">Japanese killifish</name>
    <dbReference type="NCBI Taxonomy" id="8090"/>
    <lineage>
        <taxon>Eukaryota</taxon>
        <taxon>Metazoa</taxon>
        <taxon>Chordata</taxon>
        <taxon>Craniata</taxon>
        <taxon>Vertebrata</taxon>
        <taxon>Euteleostomi</taxon>
        <taxon>Actinopterygii</taxon>
        <taxon>Neopterygii</taxon>
        <taxon>Teleostei</taxon>
        <taxon>Neoteleostei</taxon>
        <taxon>Acanthomorphata</taxon>
        <taxon>Ovalentaria</taxon>
        <taxon>Atherinomorphae</taxon>
        <taxon>Beloniformes</taxon>
        <taxon>Adrianichthyidae</taxon>
        <taxon>Oryziinae</taxon>
        <taxon>Oryzias</taxon>
    </lineage>
</organism>
<accession>Q9PVU6</accession>
<sequence>MTSLSAKDKDVVKAFWAKISSKATDIGADALGRMLVVYPQTKTYFAHWKDLSPGSAPVKKHGQTVMGGVAEAVGKIDNLTAGLLNLSELHAFTLRVDPANFKILSHNILVVLAIMFPNDFTPEVHVAMDKFLAALALALAEKYR</sequence>
<feature type="initiator methionine" description="Removed" evidence="1">
    <location>
        <position position="1"/>
    </location>
</feature>
<feature type="chain" id="PRO_0000052711" description="Hemoglobin embryonic subunit alpha">
    <location>
        <begin position="2"/>
        <end position="144"/>
    </location>
</feature>
<feature type="domain" description="Globin" evidence="2">
    <location>
        <begin position="3"/>
        <end position="144"/>
    </location>
</feature>
<feature type="binding site" evidence="2">
    <location>
        <position position="61"/>
    </location>
    <ligand>
        <name>O2</name>
        <dbReference type="ChEBI" id="CHEBI:15379"/>
    </ligand>
</feature>
<feature type="binding site" description="proximal binding residue" evidence="2">
    <location>
        <position position="90"/>
    </location>
    <ligand>
        <name>heme b</name>
        <dbReference type="ChEBI" id="CHEBI:60344"/>
    </ligand>
    <ligandPart>
        <name>Fe</name>
        <dbReference type="ChEBI" id="CHEBI:18248"/>
    </ligandPart>
</feature>
<evidence type="ECO:0000250" key="1"/>
<evidence type="ECO:0000255" key="2">
    <source>
        <dbReference type="PROSITE-ProRule" id="PRU00238"/>
    </source>
</evidence>
<proteinExistence type="evidence at transcript level"/>
<comment type="function">
    <text>Involved in oxygen transport from gills to the various peripheral tissues.</text>
</comment>
<comment type="subunit">
    <text>Heterotetramer of two alpha chains and two beta chains.</text>
</comment>
<comment type="tissue specificity">
    <text>Red blood cells.</text>
</comment>
<comment type="similarity">
    <text evidence="2">Belongs to the globin family.</text>
</comment>
<name>HBAE_ORYLA</name>
<reference key="1">
    <citation type="submission" date="1999-04" db="EMBL/GenBank/DDBJ databases">
        <title>Medaka embryonic alpha-type globin.</title>
        <authorList>
            <person name="Maruyama K."/>
            <person name="Yasumasu S."/>
            <person name="Iuchi I."/>
        </authorList>
    </citation>
    <scope>NUCLEOTIDE SEQUENCE [MRNA]</scope>
</reference>
<keyword id="KW-0349">Heme</keyword>
<keyword id="KW-0408">Iron</keyword>
<keyword id="KW-0479">Metal-binding</keyword>
<keyword id="KW-0561">Oxygen transport</keyword>
<keyword id="KW-1185">Reference proteome</keyword>
<keyword id="KW-0813">Transport</keyword>
<dbReference type="EMBL" id="AB026052">
    <property type="protein sequence ID" value="BAA85018.1"/>
    <property type="molecule type" value="mRNA"/>
</dbReference>
<dbReference type="RefSeq" id="NP_001265827.1">
    <property type="nucleotide sequence ID" value="NM_001278898.1"/>
</dbReference>
<dbReference type="RefSeq" id="NP_001265834.1">
    <property type="nucleotide sequence ID" value="NM_001278905.1"/>
</dbReference>
<dbReference type="RefSeq" id="XP_011476181.1">
    <property type="nucleotide sequence ID" value="XM_011477879.3"/>
</dbReference>
<dbReference type="SMR" id="Q9PVU6"/>
<dbReference type="FunCoup" id="Q9PVU6">
    <property type="interactions" value="475"/>
</dbReference>
<dbReference type="STRING" id="8090.ENSORLP00000006567"/>
<dbReference type="Ensembl" id="ENSORLT00000006568.2">
    <property type="protein sequence ID" value="ENSORLP00000006567.2"/>
    <property type="gene ID" value="ENSORLG00000005210.2"/>
</dbReference>
<dbReference type="Ensembl" id="ENSORLT00000006679.2">
    <property type="protein sequence ID" value="ENSORLP00000006678.1"/>
    <property type="gene ID" value="ENSORLG00000005297.2"/>
</dbReference>
<dbReference type="Ensembl" id="ENSORLT00020008798.1">
    <property type="protein sequence ID" value="ENSORLP00020003940.1"/>
    <property type="gene ID" value="ENSORLG00020004738.1"/>
</dbReference>
<dbReference type="GeneID" id="101155030"/>
<dbReference type="GeneID" id="101174505"/>
<dbReference type="KEGG" id="ola:101155030"/>
<dbReference type="KEGG" id="ola:101174505"/>
<dbReference type="eggNOG" id="KOG3378">
    <property type="taxonomic scope" value="Eukaryota"/>
</dbReference>
<dbReference type="GeneTree" id="ENSGT00940000163288"/>
<dbReference type="HOGENOM" id="CLU_003827_10_2_1"/>
<dbReference type="InParanoid" id="Q9PVU6"/>
<dbReference type="OMA" id="MVKAFWA"/>
<dbReference type="OrthoDB" id="8751793at2759"/>
<dbReference type="TreeFam" id="TF332328"/>
<dbReference type="Proteomes" id="UP000001038">
    <property type="component" value="Chromosome 8"/>
</dbReference>
<dbReference type="Proteomes" id="UP000265180">
    <property type="component" value="Chromosome 8"/>
</dbReference>
<dbReference type="Proteomes" id="UP000265200">
    <property type="component" value="Unplaced"/>
</dbReference>
<dbReference type="Bgee" id="ENSORLG00000005210">
    <property type="expression patterns" value="Expressed in sexually immature organism and 10 other cell types or tissues"/>
</dbReference>
<dbReference type="GO" id="GO:0031838">
    <property type="term" value="C:haptoglobin-hemoglobin complex"/>
    <property type="evidence" value="ECO:0000318"/>
    <property type="project" value="GO_Central"/>
</dbReference>
<dbReference type="GO" id="GO:0005833">
    <property type="term" value="C:hemoglobin complex"/>
    <property type="evidence" value="ECO:0000318"/>
    <property type="project" value="GO_Central"/>
</dbReference>
<dbReference type="GO" id="GO:0020037">
    <property type="term" value="F:heme binding"/>
    <property type="evidence" value="ECO:0000318"/>
    <property type="project" value="GO_Central"/>
</dbReference>
<dbReference type="GO" id="GO:0046872">
    <property type="term" value="F:metal ion binding"/>
    <property type="evidence" value="ECO:0007669"/>
    <property type="project" value="UniProtKB-KW"/>
</dbReference>
<dbReference type="GO" id="GO:0019825">
    <property type="term" value="F:oxygen binding"/>
    <property type="evidence" value="ECO:0000318"/>
    <property type="project" value="GO_Central"/>
</dbReference>
<dbReference type="GO" id="GO:0005344">
    <property type="term" value="F:oxygen carrier activity"/>
    <property type="evidence" value="ECO:0000318"/>
    <property type="project" value="GO_Central"/>
</dbReference>
<dbReference type="GO" id="GO:0098869">
    <property type="term" value="P:cellular oxidant detoxification"/>
    <property type="evidence" value="ECO:0007669"/>
    <property type="project" value="GOC"/>
</dbReference>
<dbReference type="GO" id="GO:0042744">
    <property type="term" value="P:hydrogen peroxide catabolic process"/>
    <property type="evidence" value="ECO:0000318"/>
    <property type="project" value="GO_Central"/>
</dbReference>
<dbReference type="CDD" id="cd08927">
    <property type="entry name" value="Hb-alpha-like"/>
    <property type="match status" value="1"/>
</dbReference>
<dbReference type="FunFam" id="1.10.490.10:FF:000002">
    <property type="entry name" value="Hemoglobin subunit alpha"/>
    <property type="match status" value="1"/>
</dbReference>
<dbReference type="Gene3D" id="1.10.490.10">
    <property type="entry name" value="Globins"/>
    <property type="match status" value="1"/>
</dbReference>
<dbReference type="InterPro" id="IPR000971">
    <property type="entry name" value="Globin"/>
</dbReference>
<dbReference type="InterPro" id="IPR009050">
    <property type="entry name" value="Globin-like_sf"/>
</dbReference>
<dbReference type="InterPro" id="IPR012292">
    <property type="entry name" value="Globin/Proto"/>
</dbReference>
<dbReference type="InterPro" id="IPR002338">
    <property type="entry name" value="Hemoglobin_a-typ"/>
</dbReference>
<dbReference type="InterPro" id="IPR050056">
    <property type="entry name" value="Hemoglobin_oxygen_transport"/>
</dbReference>
<dbReference type="PANTHER" id="PTHR11442:SF91">
    <property type="entry name" value="EMBRYONIC ALPHA GLOBIN E1-RELATED"/>
    <property type="match status" value="1"/>
</dbReference>
<dbReference type="PANTHER" id="PTHR11442">
    <property type="entry name" value="HEMOGLOBIN FAMILY MEMBER"/>
    <property type="match status" value="1"/>
</dbReference>
<dbReference type="Pfam" id="PF00042">
    <property type="entry name" value="Globin"/>
    <property type="match status" value="1"/>
</dbReference>
<dbReference type="PRINTS" id="PR00612">
    <property type="entry name" value="ALPHAHAEM"/>
</dbReference>
<dbReference type="SUPFAM" id="SSF46458">
    <property type="entry name" value="Globin-like"/>
    <property type="match status" value="1"/>
</dbReference>
<dbReference type="PROSITE" id="PS01033">
    <property type="entry name" value="GLOBIN"/>
    <property type="match status" value="1"/>
</dbReference>
<protein>
    <recommendedName>
        <fullName>Hemoglobin embryonic subunit alpha</fullName>
    </recommendedName>
    <alternativeName>
        <fullName>Alpha-globin, embryonic</fullName>
    </alternativeName>
    <alternativeName>
        <fullName>Hemoglobin alpha-chain, embryonic</fullName>
    </alternativeName>
</protein>